<sequence>MALLDFFLSRKKSTANIAKERLQIIVAERRRSDAEPHYLPQLRKDILEVICKYVQIDPEMVTVQLEQKDGDISILELNVTLPEAEESK</sequence>
<evidence type="ECO:0000255" key="1">
    <source>
        <dbReference type="HAMAP-Rule" id="MF_00262"/>
    </source>
</evidence>
<name>MINE_SALA4</name>
<accession>B5F3S6</accession>
<dbReference type="EMBL" id="CP001138">
    <property type="protein sequence ID" value="ACH48985.1"/>
    <property type="molecule type" value="Genomic_DNA"/>
</dbReference>
<dbReference type="RefSeq" id="WP_001185666.1">
    <property type="nucleotide sequence ID" value="NC_011149.1"/>
</dbReference>
<dbReference type="SMR" id="B5F3S6"/>
<dbReference type="GeneID" id="92972923"/>
<dbReference type="KEGG" id="sea:SeAg_B1317"/>
<dbReference type="HOGENOM" id="CLU_137929_2_2_6"/>
<dbReference type="Proteomes" id="UP000008819">
    <property type="component" value="Chromosome"/>
</dbReference>
<dbReference type="GO" id="GO:0051301">
    <property type="term" value="P:cell division"/>
    <property type="evidence" value="ECO:0007669"/>
    <property type="project" value="UniProtKB-KW"/>
</dbReference>
<dbReference type="GO" id="GO:0032955">
    <property type="term" value="P:regulation of division septum assembly"/>
    <property type="evidence" value="ECO:0007669"/>
    <property type="project" value="InterPro"/>
</dbReference>
<dbReference type="FunFam" id="3.30.1070.10:FF:000001">
    <property type="entry name" value="Cell division topological specificity factor"/>
    <property type="match status" value="1"/>
</dbReference>
<dbReference type="Gene3D" id="3.30.1070.10">
    <property type="entry name" value="Cell division topological specificity factor MinE"/>
    <property type="match status" value="1"/>
</dbReference>
<dbReference type="HAMAP" id="MF_00262">
    <property type="entry name" value="MinE"/>
    <property type="match status" value="1"/>
</dbReference>
<dbReference type="InterPro" id="IPR005527">
    <property type="entry name" value="MinE"/>
</dbReference>
<dbReference type="InterPro" id="IPR036707">
    <property type="entry name" value="MinE_sf"/>
</dbReference>
<dbReference type="NCBIfam" id="TIGR01215">
    <property type="entry name" value="minE"/>
    <property type="match status" value="1"/>
</dbReference>
<dbReference type="NCBIfam" id="NF001422">
    <property type="entry name" value="PRK00296.1"/>
    <property type="match status" value="1"/>
</dbReference>
<dbReference type="Pfam" id="PF03776">
    <property type="entry name" value="MinE"/>
    <property type="match status" value="1"/>
</dbReference>
<dbReference type="SUPFAM" id="SSF55229">
    <property type="entry name" value="Cell division protein MinE topological specificity domain"/>
    <property type="match status" value="1"/>
</dbReference>
<gene>
    <name evidence="1" type="primary">minE</name>
    <name type="ordered locus">SeAg_B1317</name>
</gene>
<keyword id="KW-0131">Cell cycle</keyword>
<keyword id="KW-0132">Cell division</keyword>
<protein>
    <recommendedName>
        <fullName evidence="1">Cell division topological specificity factor</fullName>
    </recommendedName>
</protein>
<proteinExistence type="inferred from homology"/>
<organism>
    <name type="scientific">Salmonella agona (strain SL483)</name>
    <dbReference type="NCBI Taxonomy" id="454166"/>
    <lineage>
        <taxon>Bacteria</taxon>
        <taxon>Pseudomonadati</taxon>
        <taxon>Pseudomonadota</taxon>
        <taxon>Gammaproteobacteria</taxon>
        <taxon>Enterobacterales</taxon>
        <taxon>Enterobacteriaceae</taxon>
        <taxon>Salmonella</taxon>
    </lineage>
</organism>
<comment type="function">
    <text evidence="1">Prevents the cell division inhibition by proteins MinC and MinD at internal division sites while permitting inhibition at polar sites. This ensures cell division at the proper site by restricting the formation of a division septum at the midpoint of the long axis of the cell.</text>
</comment>
<comment type="similarity">
    <text evidence="1">Belongs to the MinE family.</text>
</comment>
<reference key="1">
    <citation type="journal article" date="2011" name="J. Bacteriol.">
        <title>Comparative genomics of 28 Salmonella enterica isolates: evidence for CRISPR-mediated adaptive sublineage evolution.</title>
        <authorList>
            <person name="Fricke W.F."/>
            <person name="Mammel M.K."/>
            <person name="McDermott P.F."/>
            <person name="Tartera C."/>
            <person name="White D.G."/>
            <person name="Leclerc J.E."/>
            <person name="Ravel J."/>
            <person name="Cebula T.A."/>
        </authorList>
    </citation>
    <scope>NUCLEOTIDE SEQUENCE [LARGE SCALE GENOMIC DNA]</scope>
    <source>
        <strain>SL483</strain>
    </source>
</reference>
<feature type="chain" id="PRO_1000114237" description="Cell division topological specificity factor">
    <location>
        <begin position="1"/>
        <end position="88"/>
    </location>
</feature>